<accession>Q4L3K3</accession>
<sequence>MAGQVVQYGRHRKRRNYARISEVLELPNLIEIQTKSYDWFLKEGLLEMFRDISPIEDFTGNLSLEFVDYRLGEPKYDLEESKNRDATYAAPLRVKVRLIIKETGEVKEQEVFMGDFPLMTDTGTFVINGAERVIVSQLVRSPSVYFNEKIDKNGRENYDATIIPNRGAWLEYETDAKDVVYVRIDRTRKLPLTVLLRALGFSNDQEIIDLLGDSEYLRNTLEKDGTENTEQALLEIYERLRPGEPPTVENAKSLLYSRFFDPKRYDLASVGRYKANKKLHLKHRLFNQRLAEPIVNSETGEIVAEEGTVLDRRKLDEIMEVLETNANSEVFELEGTVIDEPVEIQSIKVYVPNDEEGRTTTVIGNALPDSEVKCITPADIIASMSYFFNLLNGIGYTDDIDHLGNRRLRSVGELLQNQFRIGLSRMERVVRERMSIQDTDSITPQQLINIRPVIASIKEFFGSSQLSQFMDQANPLAELTHKRRLSALGPGGLTRERAQMEVRDVHYSHYGRMCPIETPEGPNIGLINSLSSYARVNEFGFIETPYRKVDLDTNSITDQIDYLTADEEDSYVVAQANSRLDENGRFLDDEVVCRFRGNNTVMAKEKMDYMDVSPKQVVSAATACIPFLENDDSNRALMGANMQRQAVPLMNTEAPFVGTGMEHVAARDSGAAITAKYRGRVEHVESKEILVRRLVEENGTEHEGELDRYPLAKFKRSNTGTCYNQRPIVSVGDVVEYNEILADGPSMELGEMALGRNVVVGFMTWDGYNYEDAVIMSERLVKDDVYTSIHIEEYESEARDTKLGPEEITRDIPNVSENALKNLDDRGIVYVGAEVKDGDILVGKVTPKGVTELTAEERLLHAIFGEKAREVRDTSLRVPHGAGGIVLDVKVFNREEGDDTLSPGVNQLVRVYIVQKRKIHVGDKMCGRHGNKGVISKIVPEEDMPYLPDGRPIDIMLNPLGVPSRMNIGQVLELHLGMAAKNLGIHVASPVFDGANDDDVWSTIEEAGMARDGKTVLYDGRTGEPFDNRISVGVMYMLKLAHMVDDKLHARSTGPYSLVTQQPLGGKAQFGGQRFGEMEVWALEAYGAAYTLQEILTYKSDDTVGRVKTYEAIVKGENISRPSVPESFRVLMKELQSLGLDVKVMDEQDNEIEMADVDDEDATERKVDLQQKDVPETQKETTD</sequence>
<reference key="1">
    <citation type="journal article" date="2005" name="J. Bacteriol.">
        <title>Whole-genome sequencing of Staphylococcus haemolyticus uncovers the extreme plasticity of its genome and the evolution of human-colonizing staphylococcal species.</title>
        <authorList>
            <person name="Takeuchi F."/>
            <person name="Watanabe S."/>
            <person name="Baba T."/>
            <person name="Yuzawa H."/>
            <person name="Ito T."/>
            <person name="Morimoto Y."/>
            <person name="Kuroda M."/>
            <person name="Cui L."/>
            <person name="Takahashi M."/>
            <person name="Ankai A."/>
            <person name="Baba S."/>
            <person name="Fukui S."/>
            <person name="Lee J.C."/>
            <person name="Hiramatsu K."/>
        </authorList>
    </citation>
    <scope>NUCLEOTIDE SEQUENCE [LARGE SCALE GENOMIC DNA]</scope>
    <source>
        <strain>JCSC1435</strain>
    </source>
</reference>
<protein>
    <recommendedName>
        <fullName evidence="1">DNA-directed RNA polymerase subunit beta</fullName>
        <shortName evidence="1">RNAP subunit beta</shortName>
        <ecNumber evidence="1">2.7.7.6</ecNumber>
    </recommendedName>
    <alternativeName>
        <fullName evidence="1">RNA polymerase subunit beta</fullName>
    </alternativeName>
    <alternativeName>
        <fullName evidence="1">Transcriptase subunit beta</fullName>
    </alternativeName>
</protein>
<gene>
    <name evidence="1" type="primary">rpoB</name>
    <name type="ordered locus">SH2465</name>
</gene>
<keyword id="KW-0240">DNA-directed RNA polymerase</keyword>
<keyword id="KW-0548">Nucleotidyltransferase</keyword>
<keyword id="KW-0804">Transcription</keyword>
<keyword id="KW-0808">Transferase</keyword>
<evidence type="ECO:0000255" key="1">
    <source>
        <dbReference type="HAMAP-Rule" id="MF_01321"/>
    </source>
</evidence>
<evidence type="ECO:0000256" key="2">
    <source>
        <dbReference type="SAM" id="MobiDB-lite"/>
    </source>
</evidence>
<feature type="chain" id="PRO_0000047967" description="DNA-directed RNA polymerase subunit beta">
    <location>
        <begin position="1"/>
        <end position="1183"/>
    </location>
</feature>
<feature type="region of interest" description="Disordered" evidence="2">
    <location>
        <begin position="1149"/>
        <end position="1183"/>
    </location>
</feature>
<feature type="compositionally biased region" description="Acidic residues" evidence="2">
    <location>
        <begin position="1149"/>
        <end position="1162"/>
    </location>
</feature>
<feature type="compositionally biased region" description="Basic and acidic residues" evidence="2">
    <location>
        <begin position="1163"/>
        <end position="1183"/>
    </location>
</feature>
<dbReference type="EC" id="2.7.7.6" evidence="1"/>
<dbReference type="EMBL" id="AP006716">
    <property type="protein sequence ID" value="BAE05774.1"/>
    <property type="molecule type" value="Genomic_DNA"/>
</dbReference>
<dbReference type="RefSeq" id="WP_011276718.1">
    <property type="nucleotide sequence ID" value="NC_007168.1"/>
</dbReference>
<dbReference type="SMR" id="Q4L3K3"/>
<dbReference type="GeneID" id="93781679"/>
<dbReference type="KEGG" id="sha:SH2465"/>
<dbReference type="eggNOG" id="COG0085">
    <property type="taxonomic scope" value="Bacteria"/>
</dbReference>
<dbReference type="HOGENOM" id="CLU_000524_4_1_9"/>
<dbReference type="OrthoDB" id="9803954at2"/>
<dbReference type="Proteomes" id="UP000000543">
    <property type="component" value="Chromosome"/>
</dbReference>
<dbReference type="GO" id="GO:0000428">
    <property type="term" value="C:DNA-directed RNA polymerase complex"/>
    <property type="evidence" value="ECO:0007669"/>
    <property type="project" value="UniProtKB-KW"/>
</dbReference>
<dbReference type="GO" id="GO:0003677">
    <property type="term" value="F:DNA binding"/>
    <property type="evidence" value="ECO:0007669"/>
    <property type="project" value="UniProtKB-UniRule"/>
</dbReference>
<dbReference type="GO" id="GO:0003899">
    <property type="term" value="F:DNA-directed RNA polymerase activity"/>
    <property type="evidence" value="ECO:0007669"/>
    <property type="project" value="UniProtKB-UniRule"/>
</dbReference>
<dbReference type="GO" id="GO:0032549">
    <property type="term" value="F:ribonucleoside binding"/>
    <property type="evidence" value="ECO:0007669"/>
    <property type="project" value="InterPro"/>
</dbReference>
<dbReference type="GO" id="GO:0006351">
    <property type="term" value="P:DNA-templated transcription"/>
    <property type="evidence" value="ECO:0007669"/>
    <property type="project" value="UniProtKB-UniRule"/>
</dbReference>
<dbReference type="CDD" id="cd00653">
    <property type="entry name" value="RNA_pol_B_RPB2"/>
    <property type="match status" value="1"/>
</dbReference>
<dbReference type="FunFam" id="3.90.1800.10:FF:000001">
    <property type="entry name" value="DNA-directed RNA polymerase subunit beta"/>
    <property type="match status" value="1"/>
</dbReference>
<dbReference type="Gene3D" id="2.40.50.100">
    <property type="match status" value="1"/>
</dbReference>
<dbReference type="Gene3D" id="2.40.50.150">
    <property type="match status" value="1"/>
</dbReference>
<dbReference type="Gene3D" id="3.90.1100.10">
    <property type="match status" value="3"/>
</dbReference>
<dbReference type="Gene3D" id="2.40.270.10">
    <property type="entry name" value="DNA-directed RNA polymerase, subunit 2, domain 6"/>
    <property type="match status" value="1"/>
</dbReference>
<dbReference type="Gene3D" id="3.90.1800.10">
    <property type="entry name" value="RNA polymerase alpha subunit dimerisation domain"/>
    <property type="match status" value="1"/>
</dbReference>
<dbReference type="Gene3D" id="3.90.1110.10">
    <property type="entry name" value="RNA polymerase Rpb2, domain 2"/>
    <property type="match status" value="1"/>
</dbReference>
<dbReference type="HAMAP" id="MF_01321">
    <property type="entry name" value="RNApol_bact_RpoB"/>
    <property type="match status" value="1"/>
</dbReference>
<dbReference type="InterPro" id="IPR019462">
    <property type="entry name" value="DNA-dir_RNA_pol_bsu_external_1"/>
</dbReference>
<dbReference type="InterPro" id="IPR015712">
    <property type="entry name" value="DNA-dir_RNA_pol_su2"/>
</dbReference>
<dbReference type="InterPro" id="IPR007120">
    <property type="entry name" value="DNA-dir_RNAP_su2_dom"/>
</dbReference>
<dbReference type="InterPro" id="IPR037033">
    <property type="entry name" value="DNA-dir_RNAP_su2_hyb_sf"/>
</dbReference>
<dbReference type="InterPro" id="IPR010243">
    <property type="entry name" value="RNA_pol_bsu_bac"/>
</dbReference>
<dbReference type="InterPro" id="IPR007121">
    <property type="entry name" value="RNA_pol_bsu_CS"/>
</dbReference>
<dbReference type="InterPro" id="IPR007644">
    <property type="entry name" value="RNA_pol_bsu_protrusion"/>
</dbReference>
<dbReference type="InterPro" id="IPR007642">
    <property type="entry name" value="RNA_pol_Rpb2_2"/>
</dbReference>
<dbReference type="InterPro" id="IPR037034">
    <property type="entry name" value="RNA_pol_Rpb2_2_sf"/>
</dbReference>
<dbReference type="InterPro" id="IPR007645">
    <property type="entry name" value="RNA_pol_Rpb2_3"/>
</dbReference>
<dbReference type="InterPro" id="IPR007641">
    <property type="entry name" value="RNA_pol_Rpb2_7"/>
</dbReference>
<dbReference type="InterPro" id="IPR014724">
    <property type="entry name" value="RNA_pol_RPB2_OB-fold"/>
</dbReference>
<dbReference type="NCBIfam" id="NF001616">
    <property type="entry name" value="PRK00405.1"/>
    <property type="match status" value="1"/>
</dbReference>
<dbReference type="NCBIfam" id="TIGR02013">
    <property type="entry name" value="rpoB"/>
    <property type="match status" value="1"/>
</dbReference>
<dbReference type="PANTHER" id="PTHR20856">
    <property type="entry name" value="DNA-DIRECTED RNA POLYMERASE I SUBUNIT 2"/>
    <property type="match status" value="1"/>
</dbReference>
<dbReference type="Pfam" id="PF04563">
    <property type="entry name" value="RNA_pol_Rpb2_1"/>
    <property type="match status" value="1"/>
</dbReference>
<dbReference type="Pfam" id="PF04561">
    <property type="entry name" value="RNA_pol_Rpb2_2"/>
    <property type="match status" value="2"/>
</dbReference>
<dbReference type="Pfam" id="PF04565">
    <property type="entry name" value="RNA_pol_Rpb2_3"/>
    <property type="match status" value="1"/>
</dbReference>
<dbReference type="Pfam" id="PF10385">
    <property type="entry name" value="RNA_pol_Rpb2_45"/>
    <property type="match status" value="1"/>
</dbReference>
<dbReference type="Pfam" id="PF00562">
    <property type="entry name" value="RNA_pol_Rpb2_6"/>
    <property type="match status" value="1"/>
</dbReference>
<dbReference type="Pfam" id="PF04560">
    <property type="entry name" value="RNA_pol_Rpb2_7"/>
    <property type="match status" value="1"/>
</dbReference>
<dbReference type="SUPFAM" id="SSF64484">
    <property type="entry name" value="beta and beta-prime subunits of DNA dependent RNA-polymerase"/>
    <property type="match status" value="1"/>
</dbReference>
<dbReference type="PROSITE" id="PS01166">
    <property type="entry name" value="RNA_POL_BETA"/>
    <property type="match status" value="1"/>
</dbReference>
<comment type="function">
    <text evidence="1">DNA-dependent RNA polymerase catalyzes the transcription of DNA into RNA using the four ribonucleoside triphosphates as substrates.</text>
</comment>
<comment type="catalytic activity">
    <reaction evidence="1">
        <text>RNA(n) + a ribonucleoside 5'-triphosphate = RNA(n+1) + diphosphate</text>
        <dbReference type="Rhea" id="RHEA:21248"/>
        <dbReference type="Rhea" id="RHEA-COMP:14527"/>
        <dbReference type="Rhea" id="RHEA-COMP:17342"/>
        <dbReference type="ChEBI" id="CHEBI:33019"/>
        <dbReference type="ChEBI" id="CHEBI:61557"/>
        <dbReference type="ChEBI" id="CHEBI:140395"/>
        <dbReference type="EC" id="2.7.7.6"/>
    </reaction>
</comment>
<comment type="subunit">
    <text evidence="1">The RNAP catalytic core consists of 2 alpha, 1 beta, 1 beta' and 1 omega subunit. When a sigma factor is associated with the core the holoenzyme is formed, which can initiate transcription.</text>
</comment>
<comment type="similarity">
    <text evidence="1">Belongs to the RNA polymerase beta chain family.</text>
</comment>
<proteinExistence type="inferred from homology"/>
<name>RPOB_STAHJ</name>
<organism>
    <name type="scientific">Staphylococcus haemolyticus (strain JCSC1435)</name>
    <dbReference type="NCBI Taxonomy" id="279808"/>
    <lineage>
        <taxon>Bacteria</taxon>
        <taxon>Bacillati</taxon>
        <taxon>Bacillota</taxon>
        <taxon>Bacilli</taxon>
        <taxon>Bacillales</taxon>
        <taxon>Staphylococcaceae</taxon>
        <taxon>Staphylococcus</taxon>
    </lineage>
</organism>